<name>TRUB_SALAR</name>
<reference key="1">
    <citation type="submission" date="2007-11" db="EMBL/GenBank/DDBJ databases">
        <authorList>
            <consortium name="The Salmonella enterica serovar Arizonae Genome Sequencing Project"/>
            <person name="McClelland M."/>
            <person name="Sanderson E.K."/>
            <person name="Porwollik S."/>
            <person name="Spieth J."/>
            <person name="Clifton W.S."/>
            <person name="Fulton R."/>
            <person name="Chunyan W."/>
            <person name="Wollam A."/>
            <person name="Shah N."/>
            <person name="Pepin K."/>
            <person name="Bhonagiri V."/>
            <person name="Nash W."/>
            <person name="Johnson M."/>
            <person name="Thiruvilangam P."/>
            <person name="Wilson R."/>
        </authorList>
    </citation>
    <scope>NUCLEOTIDE SEQUENCE [LARGE SCALE GENOMIC DNA]</scope>
    <source>
        <strain>ATCC BAA-731 / CDC346-86 / RSK2980</strain>
    </source>
</reference>
<keyword id="KW-0413">Isomerase</keyword>
<keyword id="KW-1185">Reference proteome</keyword>
<keyword id="KW-0819">tRNA processing</keyword>
<organism>
    <name type="scientific">Salmonella arizonae (strain ATCC BAA-731 / CDC346-86 / RSK2980)</name>
    <dbReference type="NCBI Taxonomy" id="41514"/>
    <lineage>
        <taxon>Bacteria</taxon>
        <taxon>Pseudomonadati</taxon>
        <taxon>Pseudomonadota</taxon>
        <taxon>Gammaproteobacteria</taxon>
        <taxon>Enterobacterales</taxon>
        <taxon>Enterobacteriaceae</taxon>
        <taxon>Salmonella</taxon>
    </lineage>
</organism>
<dbReference type="EC" id="5.4.99.25" evidence="1"/>
<dbReference type="EMBL" id="CP000880">
    <property type="protein sequence ID" value="ABX24120.1"/>
    <property type="molecule type" value="Genomic_DNA"/>
</dbReference>
<dbReference type="SMR" id="A9MP38"/>
<dbReference type="STRING" id="41514.SARI_04340"/>
<dbReference type="KEGG" id="ses:SARI_04340"/>
<dbReference type="HOGENOM" id="CLU_032087_0_3_6"/>
<dbReference type="Proteomes" id="UP000002084">
    <property type="component" value="Chromosome"/>
</dbReference>
<dbReference type="GO" id="GO:0003723">
    <property type="term" value="F:RNA binding"/>
    <property type="evidence" value="ECO:0007669"/>
    <property type="project" value="InterPro"/>
</dbReference>
<dbReference type="GO" id="GO:0160148">
    <property type="term" value="F:tRNA pseudouridine(55) synthase activity"/>
    <property type="evidence" value="ECO:0007669"/>
    <property type="project" value="UniProtKB-EC"/>
</dbReference>
<dbReference type="GO" id="GO:1990481">
    <property type="term" value="P:mRNA pseudouridine synthesis"/>
    <property type="evidence" value="ECO:0007669"/>
    <property type="project" value="TreeGrafter"/>
</dbReference>
<dbReference type="GO" id="GO:0031119">
    <property type="term" value="P:tRNA pseudouridine synthesis"/>
    <property type="evidence" value="ECO:0007669"/>
    <property type="project" value="UniProtKB-UniRule"/>
</dbReference>
<dbReference type="CDD" id="cd02573">
    <property type="entry name" value="PseudoU_synth_EcTruB"/>
    <property type="match status" value="1"/>
</dbReference>
<dbReference type="CDD" id="cd21152">
    <property type="entry name" value="PUA_TruB_bacterial"/>
    <property type="match status" value="1"/>
</dbReference>
<dbReference type="FunFam" id="2.30.130.10:FF:000004">
    <property type="entry name" value="tRNA pseudouridine synthase B"/>
    <property type="match status" value="1"/>
</dbReference>
<dbReference type="FunFam" id="3.30.2350.10:FF:000003">
    <property type="entry name" value="tRNA pseudouridine synthase B"/>
    <property type="match status" value="1"/>
</dbReference>
<dbReference type="Gene3D" id="3.30.2350.10">
    <property type="entry name" value="Pseudouridine synthase"/>
    <property type="match status" value="1"/>
</dbReference>
<dbReference type="Gene3D" id="2.30.130.10">
    <property type="entry name" value="PUA domain"/>
    <property type="match status" value="1"/>
</dbReference>
<dbReference type="HAMAP" id="MF_01080">
    <property type="entry name" value="TruB_bact"/>
    <property type="match status" value="1"/>
</dbReference>
<dbReference type="InterPro" id="IPR020103">
    <property type="entry name" value="PsdUridine_synth_cat_dom_sf"/>
</dbReference>
<dbReference type="InterPro" id="IPR002501">
    <property type="entry name" value="PsdUridine_synth_N"/>
</dbReference>
<dbReference type="InterPro" id="IPR015947">
    <property type="entry name" value="PUA-like_sf"/>
</dbReference>
<dbReference type="InterPro" id="IPR036974">
    <property type="entry name" value="PUA_sf"/>
</dbReference>
<dbReference type="InterPro" id="IPR014780">
    <property type="entry name" value="tRNA_psdUridine_synth_TruB"/>
</dbReference>
<dbReference type="InterPro" id="IPR015240">
    <property type="entry name" value="tRNA_sdUridine_synth_fam1_C"/>
</dbReference>
<dbReference type="InterPro" id="IPR032819">
    <property type="entry name" value="TruB_C"/>
</dbReference>
<dbReference type="NCBIfam" id="TIGR00431">
    <property type="entry name" value="TruB"/>
    <property type="match status" value="1"/>
</dbReference>
<dbReference type="PANTHER" id="PTHR13767:SF2">
    <property type="entry name" value="PSEUDOURIDYLATE SYNTHASE TRUB1"/>
    <property type="match status" value="1"/>
</dbReference>
<dbReference type="PANTHER" id="PTHR13767">
    <property type="entry name" value="TRNA-PSEUDOURIDINE SYNTHASE"/>
    <property type="match status" value="1"/>
</dbReference>
<dbReference type="Pfam" id="PF09157">
    <property type="entry name" value="TruB-C_2"/>
    <property type="match status" value="1"/>
</dbReference>
<dbReference type="Pfam" id="PF16198">
    <property type="entry name" value="TruB_C_2"/>
    <property type="match status" value="1"/>
</dbReference>
<dbReference type="Pfam" id="PF01509">
    <property type="entry name" value="TruB_N"/>
    <property type="match status" value="1"/>
</dbReference>
<dbReference type="SUPFAM" id="SSF55120">
    <property type="entry name" value="Pseudouridine synthase"/>
    <property type="match status" value="1"/>
</dbReference>
<dbReference type="SUPFAM" id="SSF88697">
    <property type="entry name" value="PUA domain-like"/>
    <property type="match status" value="1"/>
</dbReference>
<gene>
    <name evidence="1" type="primary">truB</name>
    <name type="ordered locus">SARI_04340</name>
</gene>
<sequence length="314" mass="34811">MSRPRRRGRDIHGVLLLDKPQGMSSNDVLQKVKRIYNANRAGHTGALDPLATGMLPICLGEATKFSQYLLDSDKRYRVIARLGQRTDTSDADGQIVQERPVTFSAGQLASALETFRGDIEQIPSMYSALKYQGKKLYEYARLGIEVPREARPITVYELLFIRHEGNELELEVHCSKGTYIRTIIDDLGEKLGCGAHVIYLRRLTVSKYPVERMVTLEHLQALAAQAEQQGVPAAQLLDPLLMPMDSPASDYPVVNLPLTSSVYFKNGNPVRTSGAPLNGLVRVTEGEDGKFIGMGEIDDEGRVAPRRLVVEHPA</sequence>
<evidence type="ECO:0000255" key="1">
    <source>
        <dbReference type="HAMAP-Rule" id="MF_01080"/>
    </source>
</evidence>
<proteinExistence type="inferred from homology"/>
<protein>
    <recommendedName>
        <fullName evidence="1">tRNA pseudouridine synthase B</fullName>
        <ecNumber evidence="1">5.4.99.25</ecNumber>
    </recommendedName>
    <alternativeName>
        <fullName evidence="1">tRNA pseudouridine(55) synthase</fullName>
        <shortName evidence="1">Psi55 synthase</shortName>
    </alternativeName>
    <alternativeName>
        <fullName evidence="1">tRNA pseudouridylate synthase</fullName>
    </alternativeName>
    <alternativeName>
        <fullName evidence="1">tRNA-uridine isomerase</fullName>
    </alternativeName>
</protein>
<comment type="function">
    <text evidence="1">Responsible for synthesis of pseudouridine from uracil-55 in the psi GC loop of transfer RNAs.</text>
</comment>
<comment type="catalytic activity">
    <reaction evidence="1">
        <text>uridine(55) in tRNA = pseudouridine(55) in tRNA</text>
        <dbReference type="Rhea" id="RHEA:42532"/>
        <dbReference type="Rhea" id="RHEA-COMP:10101"/>
        <dbReference type="Rhea" id="RHEA-COMP:10102"/>
        <dbReference type="ChEBI" id="CHEBI:65314"/>
        <dbReference type="ChEBI" id="CHEBI:65315"/>
        <dbReference type="EC" id="5.4.99.25"/>
    </reaction>
</comment>
<comment type="similarity">
    <text evidence="1">Belongs to the pseudouridine synthase TruB family. Type 1 subfamily.</text>
</comment>
<accession>A9MP38</accession>
<feature type="chain" id="PRO_1000084666" description="tRNA pseudouridine synthase B">
    <location>
        <begin position="1"/>
        <end position="314"/>
    </location>
</feature>
<feature type="active site" description="Nucleophile" evidence="1">
    <location>
        <position position="48"/>
    </location>
</feature>
<feature type="binding site" evidence="1">
    <location>
        <position position="43"/>
    </location>
    <ligand>
        <name>substrate</name>
    </ligand>
</feature>
<feature type="binding site" evidence="1">
    <location>
        <position position="76"/>
    </location>
    <ligand>
        <name>substrate</name>
    </ligand>
</feature>
<feature type="binding site" evidence="1">
    <location>
        <position position="179"/>
    </location>
    <ligand>
        <name>substrate</name>
    </ligand>
</feature>
<feature type="binding site" evidence="1">
    <location>
        <position position="200"/>
    </location>
    <ligand>
        <name>substrate</name>
    </ligand>
</feature>